<accession>Q92IM3</accession>
<sequence length="72" mass="8187">MHYLLTKPNPKKAGADFVSELIASKLLFGNSYILSALDSYPKEIYLLPALVTELVIEHNNLVSYFDLKLFVR</sequence>
<comment type="similarity">
    <text evidence="1">Belongs to the phage portal family. HK97 subfamily.</text>
</comment>
<comment type="caution">
    <text evidence="1">Could be the product of a pseudogene. It is homologous to a middle section of two uncharacterized proteins (RF_0471 of R.felis and RBE_0759 of R.bellii).</text>
</comment>
<organism>
    <name type="scientific">Rickettsia conorii (strain ATCC VR-613 / Malish 7)</name>
    <dbReference type="NCBI Taxonomy" id="272944"/>
    <lineage>
        <taxon>Bacteria</taxon>
        <taxon>Pseudomonadati</taxon>
        <taxon>Pseudomonadota</taxon>
        <taxon>Alphaproteobacteria</taxon>
        <taxon>Rickettsiales</taxon>
        <taxon>Rickettsiaceae</taxon>
        <taxon>Rickettsieae</taxon>
        <taxon>Rickettsia</taxon>
        <taxon>spotted fever group</taxon>
    </lineage>
</organism>
<name>Y397_RICCN</name>
<dbReference type="EMBL" id="AE006914">
    <property type="protein sequence ID" value="AAL02935.1"/>
    <property type="molecule type" value="Genomic_DNA"/>
</dbReference>
<dbReference type="PIR" id="E97749">
    <property type="entry name" value="E97749"/>
</dbReference>
<dbReference type="RefSeq" id="WP_010977051.1">
    <property type="nucleotide sequence ID" value="NC_003103.1"/>
</dbReference>
<dbReference type="SMR" id="Q92IM3"/>
<dbReference type="GeneID" id="87246328"/>
<dbReference type="KEGG" id="rco:RC0397"/>
<dbReference type="HOGENOM" id="CLU_2481315_0_0_5"/>
<dbReference type="Proteomes" id="UP000000816">
    <property type="component" value="Chromosome"/>
</dbReference>
<evidence type="ECO:0000305" key="1"/>
<gene>
    <name type="ordered locus">RC0397</name>
</gene>
<reference key="1">
    <citation type="journal article" date="2001" name="Science">
        <title>Mechanisms of evolution in Rickettsia conorii and R. prowazekii.</title>
        <authorList>
            <person name="Ogata H."/>
            <person name="Audic S."/>
            <person name="Renesto-Audiffren P."/>
            <person name="Fournier P.-E."/>
            <person name="Barbe V."/>
            <person name="Samson D."/>
            <person name="Roux V."/>
            <person name="Cossart P."/>
            <person name="Weissenbach J."/>
            <person name="Claverie J.-M."/>
            <person name="Raoult D."/>
        </authorList>
    </citation>
    <scope>NUCLEOTIDE SEQUENCE [LARGE SCALE GENOMIC DNA]</scope>
    <source>
        <strain>ATCC VR-613 / Malish 7</strain>
    </source>
</reference>
<proteinExistence type="uncertain"/>
<protein>
    <recommendedName>
        <fullName>Putative uncharacterized protein RC0397</fullName>
    </recommendedName>
</protein>
<feature type="chain" id="PRO_0000280985" description="Putative uncharacterized protein RC0397">
    <location>
        <begin position="1"/>
        <end position="72"/>
    </location>
</feature>